<proteinExistence type="evidence at transcript level"/>
<accession>O42602</accession>
<gene>
    <name type="primary">crhr1</name>
    <name type="synonym">crf1</name>
</gene>
<keyword id="KW-1003">Cell membrane</keyword>
<keyword id="KW-1015">Disulfide bond</keyword>
<keyword id="KW-0297">G-protein coupled receptor</keyword>
<keyword id="KW-0325">Glycoprotein</keyword>
<keyword id="KW-0472">Membrane</keyword>
<keyword id="KW-0675">Receptor</keyword>
<keyword id="KW-1185">Reference proteome</keyword>
<keyword id="KW-0732">Signal</keyword>
<keyword id="KW-0807">Transducer</keyword>
<keyword id="KW-0812">Transmembrane</keyword>
<keyword id="KW-1133">Transmembrane helix</keyword>
<feature type="signal peptide" evidence="2">
    <location>
        <begin position="1"/>
        <end position="24"/>
    </location>
</feature>
<feature type="chain" id="PRO_0000012819" description="Corticotropin-releasing factor receptor 1">
    <location>
        <begin position="25"/>
        <end position="415"/>
    </location>
</feature>
<feature type="topological domain" description="Extracellular" evidence="1">
    <location>
        <begin position="25"/>
        <end position="111"/>
    </location>
</feature>
<feature type="transmembrane region" description="Helical; Name=1" evidence="1">
    <location>
        <begin position="112"/>
        <end position="142"/>
    </location>
</feature>
<feature type="topological domain" description="Cytoplasmic" evidence="1">
    <location>
        <begin position="143"/>
        <end position="149"/>
    </location>
</feature>
<feature type="transmembrane region" description="Helical; Name=2" evidence="1">
    <location>
        <begin position="150"/>
        <end position="174"/>
    </location>
</feature>
<feature type="topological domain" description="Extracellular" evidence="1">
    <location>
        <begin position="175"/>
        <end position="189"/>
    </location>
</feature>
<feature type="transmembrane region" description="Helical; Name=3" evidence="1">
    <location>
        <begin position="190"/>
        <end position="218"/>
    </location>
</feature>
<feature type="topological domain" description="Cytoplasmic" evidence="1">
    <location>
        <begin position="219"/>
        <end position="225"/>
    </location>
</feature>
<feature type="transmembrane region" description="Helical; Name=4" evidence="1">
    <location>
        <begin position="226"/>
        <end position="253"/>
    </location>
</feature>
<feature type="topological domain" description="Extracellular" evidence="1">
    <location>
        <begin position="254"/>
        <end position="269"/>
    </location>
</feature>
<feature type="transmembrane region" description="Helical; Name=5" evidence="1">
    <location>
        <begin position="270"/>
        <end position="295"/>
    </location>
</feature>
<feature type="topological domain" description="Cytoplasmic" evidence="1">
    <location>
        <begin position="296"/>
        <end position="306"/>
    </location>
</feature>
<feature type="transmembrane region" description="Helical; Name=6" evidence="1">
    <location>
        <begin position="307"/>
        <end position="331"/>
    </location>
</feature>
<feature type="topological domain" description="Extracellular" evidence="1">
    <location>
        <begin position="332"/>
        <end position="338"/>
    </location>
</feature>
<feature type="transmembrane region" description="Helical; Name=7" evidence="1">
    <location>
        <begin position="339"/>
        <end position="368"/>
    </location>
</feature>
<feature type="topological domain" description="Cytoplasmic" evidence="1">
    <location>
        <begin position="369"/>
        <end position="415"/>
    </location>
</feature>
<feature type="glycosylation site" description="N-linked (GlcNAc...) asparagine" evidence="2">
    <location>
        <position position="38"/>
    </location>
</feature>
<feature type="glycosylation site" description="N-linked (GlcNAc...) asparagine" evidence="2">
    <location>
        <position position="45"/>
    </location>
</feature>
<feature type="glycosylation site" description="N-linked (GlcNAc...) asparagine" evidence="2">
    <location>
        <position position="78"/>
    </location>
</feature>
<feature type="glycosylation site" description="N-linked (GlcNAc...) asparagine" evidence="2">
    <location>
        <position position="90"/>
    </location>
</feature>
<feature type="disulfide bond" evidence="1">
    <location>
        <begin position="30"/>
        <end position="54"/>
    </location>
</feature>
<feature type="disulfide bond" evidence="1">
    <location>
        <begin position="44"/>
        <end position="87"/>
    </location>
</feature>
<feature type="disulfide bond" evidence="1">
    <location>
        <begin position="68"/>
        <end position="102"/>
    </location>
</feature>
<feature type="disulfide bond" evidence="1">
    <location>
        <begin position="188"/>
        <end position="258"/>
    </location>
</feature>
<protein>
    <recommendedName>
        <fullName>Corticotropin-releasing factor receptor 1</fullName>
        <shortName>CRF-R-1</shortName>
        <shortName>CRF-R1</shortName>
        <shortName>CRFR-1</shortName>
    </recommendedName>
    <alternativeName>
        <fullName>Corticotropin-releasing hormone receptor 1</fullName>
        <shortName>CRH-R-1</shortName>
        <shortName>CRH-R1</shortName>
    </alternativeName>
</protein>
<reference key="1">
    <citation type="journal article" date="1997" name="J. Neurochem.">
        <title>Identification of two corticotropin-releasing factor receptors from Xenopus laevis with high ligand selectivity: unusual pharmacology of the type 1 receptor.</title>
        <authorList>
            <person name="Dautzenberg F.M."/>
            <person name="Dietrich K."/>
            <person name="Palchaudhuri M.R."/>
            <person name="Spiess J."/>
        </authorList>
    </citation>
    <scope>NUCLEOTIDE SEQUENCE [MRNA]</scope>
    <scope>FUNCTION</scope>
    <scope>SUBCELLULAR LOCATION</scope>
    <source>
        <tissue>Brain</tissue>
    </source>
</reference>
<comment type="function">
    <text evidence="3">G-protein coupled receptor for CRH (corticotropin-releasing factor) and UCN (urocortin). Has high affinity for CRH and UCN. Ligand binding causes a conformation change that triggers signaling via guanine nucleotide-binding proteins (G proteins) and down-stream effectors, such as adenylate cyclase. Promotes the activation of adenylate cyclase, leading to increased intracellular cAMP levels.</text>
</comment>
<comment type="subunit">
    <text evidence="1">Interacts (via N-terminal extracellular domain) with CRF and UCN.</text>
</comment>
<comment type="subcellular location">
    <subcellularLocation>
        <location evidence="3">Cell membrane</location>
        <topology evidence="3">Multi-pass membrane protein</topology>
    </subcellularLocation>
</comment>
<comment type="domain">
    <text evidence="1">The transmembrane domain is composed of seven transmembrane helices that are arranged in V-shape. Transmembrane helix 7 assumes a sharply kinked structure (By similarity).</text>
</comment>
<comment type="similarity">
    <text evidence="4">Belongs to the G-protein coupled receptor 2 family.</text>
</comment>
<evidence type="ECO:0000250" key="1"/>
<evidence type="ECO:0000255" key="2"/>
<evidence type="ECO:0000269" key="3">
    <source>
    </source>
</evidence>
<evidence type="ECO:0000305" key="4"/>
<dbReference type="EMBL" id="Y14036">
    <property type="protein sequence ID" value="CAA74363.1"/>
    <property type="molecule type" value="mRNA"/>
</dbReference>
<dbReference type="RefSeq" id="NP_001079049.1">
    <property type="nucleotide sequence ID" value="NM_001085580.1"/>
</dbReference>
<dbReference type="SMR" id="O42602"/>
<dbReference type="GlyCosmos" id="O42602">
    <property type="glycosylation" value="4 sites, No reported glycans"/>
</dbReference>
<dbReference type="GeneID" id="373580"/>
<dbReference type="KEGG" id="xla:373580"/>
<dbReference type="AGR" id="Xenbase:XB-GENE-968270"/>
<dbReference type="CTD" id="373580"/>
<dbReference type="Xenbase" id="XB-GENE-968270">
    <property type="gene designation" value="crhr1.2.S"/>
</dbReference>
<dbReference type="OrthoDB" id="6022368at2759"/>
<dbReference type="Proteomes" id="UP000186698">
    <property type="component" value="Chromosome 9_10S"/>
</dbReference>
<dbReference type="Bgee" id="373580">
    <property type="expression patterns" value="Expressed in brain and 3 other cell types or tissues"/>
</dbReference>
<dbReference type="GO" id="GO:0043005">
    <property type="term" value="C:neuron projection"/>
    <property type="evidence" value="ECO:0000318"/>
    <property type="project" value="GO_Central"/>
</dbReference>
<dbReference type="GO" id="GO:0005886">
    <property type="term" value="C:plasma membrane"/>
    <property type="evidence" value="ECO:0000250"/>
    <property type="project" value="UniProtKB"/>
</dbReference>
<dbReference type="GO" id="GO:0015056">
    <property type="term" value="F:corticotrophin-releasing factor receptor activity"/>
    <property type="evidence" value="ECO:0000250"/>
    <property type="project" value="UniProtKB"/>
</dbReference>
<dbReference type="GO" id="GO:0051424">
    <property type="term" value="F:corticotropin-releasing hormone binding"/>
    <property type="evidence" value="ECO:0000318"/>
    <property type="project" value="GO_Central"/>
</dbReference>
<dbReference type="GO" id="GO:0043404">
    <property type="term" value="F:corticotropin-releasing hormone receptor activity"/>
    <property type="evidence" value="ECO:0000318"/>
    <property type="project" value="GO_Central"/>
</dbReference>
<dbReference type="GO" id="GO:0008528">
    <property type="term" value="F:G protein-coupled peptide receptor activity"/>
    <property type="evidence" value="ECO:0000318"/>
    <property type="project" value="GO_Central"/>
</dbReference>
<dbReference type="GO" id="GO:0007189">
    <property type="term" value="P:adenylate cyclase-activating G protein-coupled receptor signaling pathway"/>
    <property type="evidence" value="ECO:0000250"/>
    <property type="project" value="UniProtKB"/>
</dbReference>
<dbReference type="GO" id="GO:0007166">
    <property type="term" value="P:cell surface receptor signaling pathway"/>
    <property type="evidence" value="ECO:0007669"/>
    <property type="project" value="InterPro"/>
</dbReference>
<dbReference type="GO" id="GO:0071376">
    <property type="term" value="P:cellular response to corticotropin-releasing hormone stimulus"/>
    <property type="evidence" value="ECO:0000250"/>
    <property type="project" value="UniProtKB"/>
</dbReference>
<dbReference type="GO" id="GO:0051458">
    <property type="term" value="P:corticotropin secretion"/>
    <property type="evidence" value="ECO:0000250"/>
    <property type="project" value="UniProtKB"/>
</dbReference>
<dbReference type="GO" id="GO:2000852">
    <property type="term" value="P:regulation of corticosterone secretion"/>
    <property type="evidence" value="ECO:0000250"/>
    <property type="project" value="UniProtKB"/>
</dbReference>
<dbReference type="CDD" id="cd15445">
    <property type="entry name" value="7tmB1_CRF-R1"/>
    <property type="match status" value="1"/>
</dbReference>
<dbReference type="FunFam" id="1.20.1070.10:FF:000021">
    <property type="entry name" value="Corticotropin releasing factor receptor 2"/>
    <property type="match status" value="1"/>
</dbReference>
<dbReference type="FunFam" id="4.10.1240.10:FF:000007">
    <property type="entry name" value="Corticotropin-releasing factor receptor 1"/>
    <property type="match status" value="1"/>
</dbReference>
<dbReference type="Gene3D" id="4.10.1240.10">
    <property type="entry name" value="GPCR, family 2, extracellular hormone receptor domain"/>
    <property type="match status" value="1"/>
</dbReference>
<dbReference type="Gene3D" id="1.20.1070.10">
    <property type="entry name" value="Rhodopsin 7-helix transmembrane proteins"/>
    <property type="match status" value="1"/>
</dbReference>
<dbReference type="InterPro" id="IPR050332">
    <property type="entry name" value="GPCR_2"/>
</dbReference>
<dbReference type="InterPro" id="IPR017981">
    <property type="entry name" value="GPCR_2-like_7TM"/>
</dbReference>
<dbReference type="InterPro" id="IPR003052">
    <property type="entry name" value="GPCR_2_CRF1_rcpt"/>
</dbReference>
<dbReference type="InterPro" id="IPR003051">
    <property type="entry name" value="GPCR_2_CRF_rcpt"/>
</dbReference>
<dbReference type="InterPro" id="IPR036445">
    <property type="entry name" value="GPCR_2_extracell_dom_sf"/>
</dbReference>
<dbReference type="InterPro" id="IPR001879">
    <property type="entry name" value="GPCR_2_extracellular_dom"/>
</dbReference>
<dbReference type="InterPro" id="IPR000832">
    <property type="entry name" value="GPCR_2_secretin-like"/>
</dbReference>
<dbReference type="InterPro" id="IPR017983">
    <property type="entry name" value="GPCR_2_secretin-like_CS"/>
</dbReference>
<dbReference type="PANTHER" id="PTHR45620:SF2">
    <property type="entry name" value="CORTICOTROPIN-RELEASING FACTOR RECEPTOR 1"/>
    <property type="match status" value="1"/>
</dbReference>
<dbReference type="PANTHER" id="PTHR45620">
    <property type="entry name" value="PDF RECEPTOR-LIKE PROTEIN-RELATED"/>
    <property type="match status" value="1"/>
</dbReference>
<dbReference type="Pfam" id="PF00002">
    <property type="entry name" value="7tm_2"/>
    <property type="match status" value="1"/>
</dbReference>
<dbReference type="Pfam" id="PF02793">
    <property type="entry name" value="HRM"/>
    <property type="match status" value="1"/>
</dbReference>
<dbReference type="PRINTS" id="PR01279">
    <property type="entry name" value="CRFRECEPTOR"/>
</dbReference>
<dbReference type="PRINTS" id="PR01280">
    <property type="entry name" value="CRFRECEPTOR1"/>
</dbReference>
<dbReference type="PRINTS" id="PR00249">
    <property type="entry name" value="GPCRSECRETIN"/>
</dbReference>
<dbReference type="SMART" id="SM00008">
    <property type="entry name" value="HormR"/>
    <property type="match status" value="1"/>
</dbReference>
<dbReference type="SUPFAM" id="SSF81321">
    <property type="entry name" value="Family A G protein-coupled receptor-like"/>
    <property type="match status" value="1"/>
</dbReference>
<dbReference type="SUPFAM" id="SSF111418">
    <property type="entry name" value="Hormone receptor domain"/>
    <property type="match status" value="1"/>
</dbReference>
<dbReference type="PROSITE" id="PS00649">
    <property type="entry name" value="G_PROTEIN_RECEP_F2_1"/>
    <property type="match status" value="1"/>
</dbReference>
<dbReference type="PROSITE" id="PS00650">
    <property type="entry name" value="G_PROTEIN_RECEP_F2_2"/>
    <property type="match status" value="1"/>
</dbReference>
<dbReference type="PROSITE" id="PS50227">
    <property type="entry name" value="G_PROTEIN_RECEP_F2_3"/>
    <property type="match status" value="1"/>
</dbReference>
<dbReference type="PROSITE" id="PS50261">
    <property type="entry name" value="G_PROTEIN_RECEP_F2_4"/>
    <property type="match status" value="1"/>
</dbReference>
<sequence>MLLAKTPCLLLVQVIAAGISFALTSLQDQCETLQHNSNFTGLACNASIDMIGTCWPSTAAGQMVARPCPEYFHGVQYNTTGNVYRECHLNGSWAGRGDYAQCQEILKQEKKTKVHYHIAIVINFLGHSISLCALLVAFILFLRLRSIRCLRNIIHWNLITAFILRNVTWFVMQLTLSHEAHDSNVVWCRLVTIAHNYFYVTNFFWMFGEGCYLHTAIVLTYSTDKLRKWMFICIGWCIPFPIIVAWAIGKLYYDNEKCWFGKKAGVYTDFIYQGPVILVLLINFIFLFNIVRILMTKLRASTTSETIQYRKAVKATLVLLPLLGITYMLFFVTPGEDEISRIVFIYFNSFLQSFQGFFVSVFYCFLNSEVRSAVRKRWHRWQDKHSIRARVARAMSIPTSPTRISFHSIKQSSAI</sequence>
<organism>
    <name type="scientific">Xenopus laevis</name>
    <name type="common">African clawed frog</name>
    <dbReference type="NCBI Taxonomy" id="8355"/>
    <lineage>
        <taxon>Eukaryota</taxon>
        <taxon>Metazoa</taxon>
        <taxon>Chordata</taxon>
        <taxon>Craniata</taxon>
        <taxon>Vertebrata</taxon>
        <taxon>Euteleostomi</taxon>
        <taxon>Amphibia</taxon>
        <taxon>Batrachia</taxon>
        <taxon>Anura</taxon>
        <taxon>Pipoidea</taxon>
        <taxon>Pipidae</taxon>
        <taxon>Xenopodinae</taxon>
        <taxon>Xenopus</taxon>
        <taxon>Xenopus</taxon>
    </lineage>
</organism>
<name>CRFR1_XENLA</name>